<proteinExistence type="predicted"/>
<name>YIDF_ECOLI</name>
<protein>
    <recommendedName>
        <fullName>Uncharacterized protein YidF</fullName>
    </recommendedName>
</protein>
<gene>
    <name type="primary">yidF</name>
    <name type="ordered locus">b3674</name>
    <name type="ordered locus">JW3650</name>
</gene>
<dbReference type="EMBL" id="L10328">
    <property type="protein sequence ID" value="AAA62026.1"/>
    <property type="molecule type" value="Genomic_DNA"/>
</dbReference>
<dbReference type="EMBL" id="U00096">
    <property type="protein sequence ID" value="AAC76697.1"/>
    <property type="molecule type" value="Genomic_DNA"/>
</dbReference>
<dbReference type="EMBL" id="AP009048">
    <property type="protein sequence ID" value="BAE77619.1"/>
    <property type="molecule type" value="Genomic_DNA"/>
</dbReference>
<dbReference type="PIR" id="C65169">
    <property type="entry name" value="C65169"/>
</dbReference>
<dbReference type="RefSeq" id="NP_418130.1">
    <property type="nucleotide sequence ID" value="NC_000913.3"/>
</dbReference>
<dbReference type="RefSeq" id="WP_000148061.1">
    <property type="nucleotide sequence ID" value="NZ_SSZK01000035.1"/>
</dbReference>
<dbReference type="SMR" id="P31443"/>
<dbReference type="BioGRID" id="4261240">
    <property type="interactions" value="97"/>
</dbReference>
<dbReference type="BioGRID" id="852485">
    <property type="interactions" value="1"/>
</dbReference>
<dbReference type="FunCoup" id="P31443">
    <property type="interactions" value="21"/>
</dbReference>
<dbReference type="IntAct" id="P31443">
    <property type="interactions" value="8"/>
</dbReference>
<dbReference type="STRING" id="511145.b3674"/>
<dbReference type="PaxDb" id="511145-b3674"/>
<dbReference type="EnsemblBacteria" id="AAC76697">
    <property type="protein sequence ID" value="AAC76697"/>
    <property type="gene ID" value="b3674"/>
</dbReference>
<dbReference type="GeneID" id="948179"/>
<dbReference type="KEGG" id="ecj:JW3650"/>
<dbReference type="KEGG" id="eco:b3674"/>
<dbReference type="KEGG" id="ecoc:C3026_19925"/>
<dbReference type="PATRIC" id="fig|1411691.4.peg.3030"/>
<dbReference type="EchoBASE" id="EB1645"/>
<dbReference type="eggNOG" id="COG0641">
    <property type="taxonomic scope" value="Bacteria"/>
</dbReference>
<dbReference type="HOGENOM" id="CLU_138420_0_0_6"/>
<dbReference type="InParanoid" id="P31443"/>
<dbReference type="OMA" id="CEGYQAF"/>
<dbReference type="OrthoDB" id="6581528at2"/>
<dbReference type="PhylomeDB" id="P31443"/>
<dbReference type="BioCyc" id="EcoCyc:EG11694-MONOMER"/>
<dbReference type="PRO" id="PR:P31443"/>
<dbReference type="Proteomes" id="UP000000625">
    <property type="component" value="Chromosome"/>
</dbReference>
<dbReference type="GO" id="GO:0016491">
    <property type="term" value="F:oxidoreductase activity"/>
    <property type="evidence" value="ECO:0007669"/>
    <property type="project" value="InterPro"/>
</dbReference>
<dbReference type="Gene3D" id="3.20.20.70">
    <property type="entry name" value="Aldolase class I"/>
    <property type="match status" value="1"/>
</dbReference>
<dbReference type="InterPro" id="IPR013785">
    <property type="entry name" value="Aldolase_TIM"/>
</dbReference>
<dbReference type="InterPro" id="IPR023867">
    <property type="entry name" value="Sulphatase_maturase_rSAM"/>
</dbReference>
<dbReference type="PANTHER" id="PTHR43273">
    <property type="entry name" value="ANAEROBIC SULFATASE-MATURATING ENZYME HOMOLOG ASLB-RELATED"/>
    <property type="match status" value="1"/>
</dbReference>
<dbReference type="PANTHER" id="PTHR43273:SF3">
    <property type="entry name" value="ANAEROBIC SULFATASE-MATURATING ENZYME HOMOLOG ASLB-RELATED"/>
    <property type="match status" value="1"/>
</dbReference>
<reference key="1">
    <citation type="journal article" date="1993" name="Genomics">
        <title>DNA sequence and analysis of 136 kilobases of the Escherichia coli genome: organizational symmetry around the origin of replication.</title>
        <authorList>
            <person name="Burland V.D."/>
            <person name="Plunkett G. III"/>
            <person name="Daniels D.L."/>
            <person name="Blattner F.R."/>
        </authorList>
    </citation>
    <scope>NUCLEOTIDE SEQUENCE [LARGE SCALE GENOMIC DNA]</scope>
    <source>
        <strain>K12 / MG1655 / ATCC 47076</strain>
    </source>
</reference>
<reference key="2">
    <citation type="journal article" date="1997" name="Science">
        <title>The complete genome sequence of Escherichia coli K-12.</title>
        <authorList>
            <person name="Blattner F.R."/>
            <person name="Plunkett G. III"/>
            <person name="Bloch C.A."/>
            <person name="Perna N.T."/>
            <person name="Burland V."/>
            <person name="Riley M."/>
            <person name="Collado-Vides J."/>
            <person name="Glasner J.D."/>
            <person name="Rode C.K."/>
            <person name="Mayhew G.F."/>
            <person name="Gregor J."/>
            <person name="Davis N.W."/>
            <person name="Kirkpatrick H.A."/>
            <person name="Goeden M.A."/>
            <person name="Rose D.J."/>
            <person name="Mau B."/>
            <person name="Shao Y."/>
        </authorList>
    </citation>
    <scope>NUCLEOTIDE SEQUENCE [LARGE SCALE GENOMIC DNA]</scope>
    <source>
        <strain>K12 / MG1655 / ATCC 47076</strain>
    </source>
</reference>
<reference key="3">
    <citation type="journal article" date="2006" name="Mol. Syst. Biol.">
        <title>Highly accurate genome sequences of Escherichia coli K-12 strains MG1655 and W3110.</title>
        <authorList>
            <person name="Hayashi K."/>
            <person name="Morooka N."/>
            <person name="Yamamoto Y."/>
            <person name="Fujita K."/>
            <person name="Isono K."/>
            <person name="Choi S."/>
            <person name="Ohtsubo E."/>
            <person name="Baba T."/>
            <person name="Wanner B.L."/>
            <person name="Mori H."/>
            <person name="Horiuchi T."/>
        </authorList>
    </citation>
    <scope>NUCLEOTIDE SEQUENCE [LARGE SCALE GENOMIC DNA]</scope>
    <source>
        <strain>K12 / W3110 / ATCC 27325 / DSM 5911</strain>
    </source>
</reference>
<organism>
    <name type="scientific">Escherichia coli (strain K12)</name>
    <dbReference type="NCBI Taxonomy" id="83333"/>
    <lineage>
        <taxon>Bacteria</taxon>
        <taxon>Pseudomonadati</taxon>
        <taxon>Pseudomonadota</taxon>
        <taxon>Gammaproteobacteria</taxon>
        <taxon>Enterobacterales</taxon>
        <taxon>Enterobacteriaceae</taxon>
        <taxon>Escherichia</taxon>
    </lineage>
</organism>
<feature type="chain" id="PRO_0000169623" description="Uncharacterized protein YidF">
    <location>
        <begin position="1"/>
        <end position="165"/>
    </location>
</feature>
<keyword id="KW-1185">Reference proteome</keyword>
<accession>P31443</accession>
<accession>P76730</accession>
<accession>Q2M7Y7</accession>
<sequence>MTGSQVIDAEEDRHKLVVEYKDALQPADFYHNFKQRGIRSVQLIPYLEFDDRGDLTAASVTAELWGKFLIALFECWVRADISRISIELFDATLQKWCGSENPQPRCDCQACDWHRLCPHARQETPDSVLCAGYQAFYSYSAPHMRVMRDLIKQHRSPMELMTMLR</sequence>